<evidence type="ECO:0000255" key="1">
    <source>
        <dbReference type="HAMAP-Rule" id="MF_01589"/>
    </source>
</evidence>
<keyword id="KW-1185">Reference proteome</keyword>
<keyword id="KW-0949">S-adenosyl-L-methionine</keyword>
<keyword id="KW-0808">Transferase</keyword>
<comment type="function">
    <text evidence="1">Catalyzes the conversion of S-adenosyl-L-methionine (SAM) to carboxy-S-adenosyl-L-methionine (Cx-SAM).</text>
</comment>
<comment type="catalytic activity">
    <reaction evidence="1">
        <text>prephenate + S-adenosyl-L-methionine = carboxy-S-adenosyl-L-methionine + 3-phenylpyruvate + H2O</text>
        <dbReference type="Rhea" id="RHEA:51692"/>
        <dbReference type="ChEBI" id="CHEBI:15377"/>
        <dbReference type="ChEBI" id="CHEBI:18005"/>
        <dbReference type="ChEBI" id="CHEBI:29934"/>
        <dbReference type="ChEBI" id="CHEBI:59789"/>
        <dbReference type="ChEBI" id="CHEBI:134278"/>
    </reaction>
</comment>
<comment type="subunit">
    <text evidence="1">Homodimer.</text>
</comment>
<comment type="similarity">
    <text evidence="1">Belongs to the class I-like SAM-binding methyltransferase superfamily. Cx-SAM synthase family.</text>
</comment>
<organism>
    <name type="scientific">Pasteurella multocida (strain Pm70)</name>
    <dbReference type="NCBI Taxonomy" id="272843"/>
    <lineage>
        <taxon>Bacteria</taxon>
        <taxon>Pseudomonadati</taxon>
        <taxon>Pseudomonadota</taxon>
        <taxon>Gammaproteobacteria</taxon>
        <taxon>Pasteurellales</taxon>
        <taxon>Pasteurellaceae</taxon>
        <taxon>Pasteurella</taxon>
    </lineage>
</organism>
<accession>Q9CM57</accession>
<protein>
    <recommendedName>
        <fullName evidence="1">Carboxy-S-adenosyl-L-methionine synthase</fullName>
        <shortName evidence="1">Cx-SAM synthase</shortName>
        <ecNumber evidence="1">2.1.3.-</ecNumber>
    </recommendedName>
</protein>
<feature type="chain" id="PRO_0000314350" description="Carboxy-S-adenosyl-L-methionine synthase">
    <location>
        <begin position="1"/>
        <end position="241"/>
    </location>
</feature>
<feature type="binding site" evidence="1">
    <location>
        <position position="38"/>
    </location>
    <ligand>
        <name>S-adenosyl-L-methionine</name>
        <dbReference type="ChEBI" id="CHEBI:59789"/>
    </ligand>
</feature>
<feature type="binding site" evidence="1">
    <location>
        <begin position="63"/>
        <end position="65"/>
    </location>
    <ligand>
        <name>S-adenosyl-L-methionine</name>
        <dbReference type="ChEBI" id="CHEBI:59789"/>
    </ligand>
</feature>
<feature type="binding site" evidence="1">
    <location>
        <begin position="88"/>
        <end position="89"/>
    </location>
    <ligand>
        <name>S-adenosyl-L-methionine</name>
        <dbReference type="ChEBI" id="CHEBI:59789"/>
    </ligand>
</feature>
<feature type="binding site" evidence="1">
    <location>
        <begin position="116"/>
        <end position="117"/>
    </location>
    <ligand>
        <name>S-adenosyl-L-methionine</name>
        <dbReference type="ChEBI" id="CHEBI:59789"/>
    </ligand>
</feature>
<feature type="binding site" evidence="1">
    <location>
        <position position="131"/>
    </location>
    <ligand>
        <name>S-adenosyl-L-methionine</name>
        <dbReference type="ChEBI" id="CHEBI:59789"/>
    </ligand>
</feature>
<feature type="binding site" evidence="1">
    <location>
        <position position="198"/>
    </location>
    <ligand>
        <name>S-adenosyl-L-methionine</name>
        <dbReference type="ChEBI" id="CHEBI:59789"/>
    </ligand>
</feature>
<reference key="1">
    <citation type="journal article" date="2001" name="Proc. Natl. Acad. Sci. U.S.A.">
        <title>Complete genomic sequence of Pasteurella multocida Pm70.</title>
        <authorList>
            <person name="May B.J."/>
            <person name="Zhang Q."/>
            <person name="Li L.L."/>
            <person name="Paustian M.L."/>
            <person name="Whittam T.S."/>
            <person name="Kapur V."/>
        </authorList>
    </citation>
    <scope>NUCLEOTIDE SEQUENCE [LARGE SCALE GENOMIC DNA]</scope>
    <source>
        <strain>Pm70</strain>
    </source>
</reference>
<dbReference type="EC" id="2.1.3.-" evidence="1"/>
<dbReference type="EMBL" id="AE004439">
    <property type="protein sequence ID" value="AAK03069.1"/>
    <property type="molecule type" value="Genomic_DNA"/>
</dbReference>
<dbReference type="RefSeq" id="WP_010906951.1">
    <property type="nucleotide sequence ID" value="NC_002663.1"/>
</dbReference>
<dbReference type="SMR" id="Q9CM57"/>
<dbReference type="STRING" id="272843.PM0985"/>
<dbReference type="EnsemblBacteria" id="AAK03069">
    <property type="protein sequence ID" value="AAK03069"/>
    <property type="gene ID" value="PM0985"/>
</dbReference>
<dbReference type="KEGG" id="pmu:PM0985"/>
<dbReference type="PATRIC" id="fig|272843.6.peg.997"/>
<dbReference type="HOGENOM" id="CLU_078475_0_0_6"/>
<dbReference type="OrthoDB" id="9779941at2"/>
<dbReference type="Proteomes" id="UP000000809">
    <property type="component" value="Chromosome"/>
</dbReference>
<dbReference type="GO" id="GO:0016743">
    <property type="term" value="F:carboxyl- or carbamoyltransferase activity"/>
    <property type="evidence" value="ECO:0007669"/>
    <property type="project" value="UniProtKB-UniRule"/>
</dbReference>
<dbReference type="GO" id="GO:1904047">
    <property type="term" value="F:S-adenosyl-L-methionine binding"/>
    <property type="evidence" value="ECO:0007669"/>
    <property type="project" value="UniProtKB-UniRule"/>
</dbReference>
<dbReference type="GO" id="GO:0002098">
    <property type="term" value="P:tRNA wobble uridine modification"/>
    <property type="evidence" value="ECO:0007669"/>
    <property type="project" value="InterPro"/>
</dbReference>
<dbReference type="CDD" id="cd02440">
    <property type="entry name" value="AdoMet_MTases"/>
    <property type="match status" value="1"/>
</dbReference>
<dbReference type="Gene3D" id="3.40.50.150">
    <property type="entry name" value="Vaccinia Virus protein VP39"/>
    <property type="match status" value="1"/>
</dbReference>
<dbReference type="HAMAP" id="MF_01589">
    <property type="entry name" value="Cx_SAM_synthase"/>
    <property type="match status" value="1"/>
</dbReference>
<dbReference type="InterPro" id="IPR005271">
    <property type="entry name" value="CmoA"/>
</dbReference>
<dbReference type="InterPro" id="IPR041698">
    <property type="entry name" value="Methyltransf_25"/>
</dbReference>
<dbReference type="InterPro" id="IPR029063">
    <property type="entry name" value="SAM-dependent_MTases_sf"/>
</dbReference>
<dbReference type="NCBIfam" id="TIGR00740">
    <property type="entry name" value="carboxy-S-adenosyl-L-methionine synthase CmoA"/>
    <property type="match status" value="1"/>
</dbReference>
<dbReference type="NCBIfam" id="NF011995">
    <property type="entry name" value="PRK15451.1"/>
    <property type="match status" value="1"/>
</dbReference>
<dbReference type="PANTHER" id="PTHR43861:SF2">
    <property type="entry name" value="CARBOXY-S-ADENOSYL-L-METHIONINE SYNTHASE"/>
    <property type="match status" value="1"/>
</dbReference>
<dbReference type="PANTHER" id="PTHR43861">
    <property type="entry name" value="TRANS-ACONITATE 2-METHYLTRANSFERASE-RELATED"/>
    <property type="match status" value="1"/>
</dbReference>
<dbReference type="Pfam" id="PF13649">
    <property type="entry name" value="Methyltransf_25"/>
    <property type="match status" value="1"/>
</dbReference>
<dbReference type="PIRSF" id="PIRSF006325">
    <property type="entry name" value="MeTrfase_bac"/>
    <property type="match status" value="1"/>
</dbReference>
<dbReference type="SUPFAM" id="SSF53335">
    <property type="entry name" value="S-adenosyl-L-methionine-dependent methyltransferases"/>
    <property type="match status" value="1"/>
</dbReference>
<proteinExistence type="inferred from homology"/>
<name>CMOA_PASMU</name>
<gene>
    <name evidence="1" type="primary">cmoA</name>
    <name type="ordered locus">PM0985</name>
</gene>
<sequence length="241" mass="27212">MTKDTLFSTPIAKLGDFTFDESVAEVFPDMIQRSIPGYANIITAIGMLASRFVTANSNVYDLGCSRGAATLSARRHINQPGVKIIGVDNSQPMVDRCRQHVSAYQSTIPVDIICDDIRHIEIENASMVILNFTLQFLPPEDRRSLLSKIYQGLQPNGILVLSEKFHFEDQNMNALLIDLHHQFKRANGYSELEVSQKRTALENVMRTDSIQAHKMRLAEVGFQQVELWFQCFNFGSMIAVK</sequence>